<evidence type="ECO:0000255" key="1">
    <source>
        <dbReference type="HAMAP-Rule" id="MF_00374"/>
    </source>
</evidence>
<evidence type="ECO:0000305" key="2"/>
<dbReference type="EMBL" id="CP001176">
    <property type="protein sequence ID" value="ACK59239.1"/>
    <property type="molecule type" value="Genomic_DNA"/>
</dbReference>
<dbReference type="RefSeq" id="WP_000855718.1">
    <property type="nucleotide sequence ID" value="NZ_VEHB01000017.1"/>
</dbReference>
<dbReference type="SMR" id="B7HJ56"/>
<dbReference type="GeneID" id="93010935"/>
<dbReference type="KEGG" id="bcb:BCB4264_A0139"/>
<dbReference type="HOGENOM" id="CLU_158491_5_2_9"/>
<dbReference type="Proteomes" id="UP000007096">
    <property type="component" value="Chromosome"/>
</dbReference>
<dbReference type="GO" id="GO:0022625">
    <property type="term" value="C:cytosolic large ribosomal subunit"/>
    <property type="evidence" value="ECO:0007669"/>
    <property type="project" value="TreeGrafter"/>
</dbReference>
<dbReference type="GO" id="GO:0003735">
    <property type="term" value="F:structural constituent of ribosome"/>
    <property type="evidence" value="ECO:0007669"/>
    <property type="project" value="InterPro"/>
</dbReference>
<dbReference type="GO" id="GO:0006412">
    <property type="term" value="P:translation"/>
    <property type="evidence" value="ECO:0007669"/>
    <property type="project" value="UniProtKB-UniRule"/>
</dbReference>
<dbReference type="CDD" id="cd00427">
    <property type="entry name" value="Ribosomal_L29_HIP"/>
    <property type="match status" value="1"/>
</dbReference>
<dbReference type="FunFam" id="1.10.287.310:FF:000001">
    <property type="entry name" value="50S ribosomal protein L29"/>
    <property type="match status" value="1"/>
</dbReference>
<dbReference type="Gene3D" id="1.10.287.310">
    <property type="match status" value="1"/>
</dbReference>
<dbReference type="HAMAP" id="MF_00374">
    <property type="entry name" value="Ribosomal_uL29"/>
    <property type="match status" value="1"/>
</dbReference>
<dbReference type="InterPro" id="IPR050063">
    <property type="entry name" value="Ribosomal_protein_uL29"/>
</dbReference>
<dbReference type="InterPro" id="IPR001854">
    <property type="entry name" value="Ribosomal_uL29"/>
</dbReference>
<dbReference type="InterPro" id="IPR018254">
    <property type="entry name" value="Ribosomal_uL29_CS"/>
</dbReference>
<dbReference type="InterPro" id="IPR036049">
    <property type="entry name" value="Ribosomal_uL29_sf"/>
</dbReference>
<dbReference type="NCBIfam" id="TIGR00012">
    <property type="entry name" value="L29"/>
    <property type="match status" value="1"/>
</dbReference>
<dbReference type="PANTHER" id="PTHR10916">
    <property type="entry name" value="60S RIBOSOMAL PROTEIN L35/50S RIBOSOMAL PROTEIN L29"/>
    <property type="match status" value="1"/>
</dbReference>
<dbReference type="PANTHER" id="PTHR10916:SF0">
    <property type="entry name" value="LARGE RIBOSOMAL SUBUNIT PROTEIN UL29C"/>
    <property type="match status" value="1"/>
</dbReference>
<dbReference type="Pfam" id="PF00831">
    <property type="entry name" value="Ribosomal_L29"/>
    <property type="match status" value="1"/>
</dbReference>
<dbReference type="SUPFAM" id="SSF46561">
    <property type="entry name" value="Ribosomal protein L29 (L29p)"/>
    <property type="match status" value="1"/>
</dbReference>
<dbReference type="PROSITE" id="PS00579">
    <property type="entry name" value="RIBOSOMAL_L29"/>
    <property type="match status" value="1"/>
</dbReference>
<protein>
    <recommendedName>
        <fullName evidence="1">Large ribosomal subunit protein uL29</fullName>
    </recommendedName>
    <alternativeName>
        <fullName evidence="2">50S ribosomal protein L29</fullName>
    </alternativeName>
</protein>
<sequence length="66" mass="7768">MKTNDIRELTTAEIETKVKALKEELFNLRFQLATGQLENPTRIREVRKAIARMKTVVREREIGINR</sequence>
<comment type="similarity">
    <text evidence="1">Belongs to the universal ribosomal protein uL29 family.</text>
</comment>
<name>RL29_BACC4</name>
<gene>
    <name evidence="1" type="primary">rpmC</name>
    <name type="ordered locus">BCB4264_A0139</name>
</gene>
<organism>
    <name type="scientific">Bacillus cereus (strain B4264)</name>
    <dbReference type="NCBI Taxonomy" id="405532"/>
    <lineage>
        <taxon>Bacteria</taxon>
        <taxon>Bacillati</taxon>
        <taxon>Bacillota</taxon>
        <taxon>Bacilli</taxon>
        <taxon>Bacillales</taxon>
        <taxon>Bacillaceae</taxon>
        <taxon>Bacillus</taxon>
        <taxon>Bacillus cereus group</taxon>
    </lineage>
</organism>
<keyword id="KW-0687">Ribonucleoprotein</keyword>
<keyword id="KW-0689">Ribosomal protein</keyword>
<reference key="1">
    <citation type="submission" date="2008-10" db="EMBL/GenBank/DDBJ databases">
        <title>Genome sequence of Bacillus cereus B4264.</title>
        <authorList>
            <person name="Dodson R.J."/>
            <person name="Durkin A.S."/>
            <person name="Rosovitz M.J."/>
            <person name="Rasko D.A."/>
            <person name="Hoffmaster A."/>
            <person name="Ravel J."/>
            <person name="Sutton G."/>
        </authorList>
    </citation>
    <scope>NUCLEOTIDE SEQUENCE [LARGE SCALE GENOMIC DNA]</scope>
    <source>
        <strain>B4264</strain>
    </source>
</reference>
<accession>B7HJ56</accession>
<proteinExistence type="inferred from homology"/>
<feature type="chain" id="PRO_1000121730" description="Large ribosomal subunit protein uL29">
    <location>
        <begin position="1"/>
        <end position="66"/>
    </location>
</feature>